<proteinExistence type="inferred from homology"/>
<evidence type="ECO:0000255" key="1">
    <source>
        <dbReference type="HAMAP-Rule" id="MF_00736"/>
    </source>
</evidence>
<evidence type="ECO:0000305" key="2"/>
<name>RL11_FRATF</name>
<comment type="function">
    <text evidence="1">Forms part of the ribosomal stalk which helps the ribosome interact with GTP-bound translation factors.</text>
</comment>
<comment type="subunit">
    <text evidence="1">Part of the ribosomal stalk of the 50S ribosomal subunit. Interacts with L10 and the large rRNA to form the base of the stalk. L10 forms an elongated spine to which L12 dimers bind in a sequential fashion forming a multimeric L10(L12)X complex.</text>
</comment>
<comment type="PTM">
    <text evidence="1">One or more lysine residues are methylated.</text>
</comment>
<comment type="similarity">
    <text evidence="1">Belongs to the universal ribosomal protein uL11 family.</text>
</comment>
<comment type="sequence caution" evidence="2">
    <conflict type="erroneous initiation">
        <sequence resource="EMBL-CDS" id="ABU62327"/>
    </conflict>
</comment>
<sequence>MAKKKIEAIIKLQVAAGKANPSPPIGPALGQHGVNIMGFCKEFNAKTQGMEPGMPIPVEISVYSDRSFTFEMKTPPASYLIKKAINVKSGSSKPSKEFIGTITRAQLEEIAKVKDPDLTAADLDAAVRIIAGSARSMGVKVEGV</sequence>
<reference key="1">
    <citation type="journal article" date="2009" name="PLoS ONE">
        <title>Complete genome sequence of Francisella tularensis subspecies holarctica FTNF002-00.</title>
        <authorList>
            <person name="Barabote R.D."/>
            <person name="Xie G."/>
            <person name="Brettin T.S."/>
            <person name="Hinrichs S.H."/>
            <person name="Fey P.D."/>
            <person name="Jay J.J."/>
            <person name="Engle J.L."/>
            <person name="Godbole S.D."/>
            <person name="Noronha J.M."/>
            <person name="Scheuermann R.H."/>
            <person name="Zhou L.W."/>
            <person name="Lion C."/>
            <person name="Dempsey M.P."/>
        </authorList>
    </citation>
    <scope>NUCLEOTIDE SEQUENCE [LARGE SCALE GENOMIC DNA]</scope>
    <source>
        <strain>FTNF002-00 / FTA</strain>
    </source>
</reference>
<accession>A7NEC4</accession>
<dbReference type="EMBL" id="CP000803">
    <property type="protein sequence ID" value="ABU62327.2"/>
    <property type="status" value="ALT_INIT"/>
    <property type="molecule type" value="Genomic_DNA"/>
</dbReference>
<dbReference type="RefSeq" id="WP_010032706.1">
    <property type="nucleotide sequence ID" value="NC_009749.1"/>
</dbReference>
<dbReference type="SMR" id="A7NEC4"/>
<dbReference type="KEGG" id="fta:FTA_1852"/>
<dbReference type="HOGENOM" id="CLU_074237_2_0_6"/>
<dbReference type="GO" id="GO:0022625">
    <property type="term" value="C:cytosolic large ribosomal subunit"/>
    <property type="evidence" value="ECO:0007669"/>
    <property type="project" value="TreeGrafter"/>
</dbReference>
<dbReference type="GO" id="GO:0070180">
    <property type="term" value="F:large ribosomal subunit rRNA binding"/>
    <property type="evidence" value="ECO:0007669"/>
    <property type="project" value="UniProtKB-UniRule"/>
</dbReference>
<dbReference type="GO" id="GO:0003735">
    <property type="term" value="F:structural constituent of ribosome"/>
    <property type="evidence" value="ECO:0007669"/>
    <property type="project" value="InterPro"/>
</dbReference>
<dbReference type="GO" id="GO:0006412">
    <property type="term" value="P:translation"/>
    <property type="evidence" value="ECO:0007669"/>
    <property type="project" value="UniProtKB-UniRule"/>
</dbReference>
<dbReference type="CDD" id="cd00349">
    <property type="entry name" value="Ribosomal_L11"/>
    <property type="match status" value="1"/>
</dbReference>
<dbReference type="FunFam" id="1.10.10.250:FF:000001">
    <property type="entry name" value="50S ribosomal protein L11"/>
    <property type="match status" value="1"/>
</dbReference>
<dbReference type="FunFam" id="3.30.1550.10:FF:000001">
    <property type="entry name" value="50S ribosomal protein L11"/>
    <property type="match status" value="1"/>
</dbReference>
<dbReference type="Gene3D" id="1.10.10.250">
    <property type="entry name" value="Ribosomal protein L11, C-terminal domain"/>
    <property type="match status" value="1"/>
</dbReference>
<dbReference type="Gene3D" id="3.30.1550.10">
    <property type="entry name" value="Ribosomal protein L11/L12, N-terminal domain"/>
    <property type="match status" value="1"/>
</dbReference>
<dbReference type="HAMAP" id="MF_00736">
    <property type="entry name" value="Ribosomal_uL11"/>
    <property type="match status" value="1"/>
</dbReference>
<dbReference type="InterPro" id="IPR000911">
    <property type="entry name" value="Ribosomal_uL11"/>
</dbReference>
<dbReference type="InterPro" id="IPR006519">
    <property type="entry name" value="Ribosomal_uL11_bac-typ"/>
</dbReference>
<dbReference type="InterPro" id="IPR020783">
    <property type="entry name" value="Ribosomal_uL11_C"/>
</dbReference>
<dbReference type="InterPro" id="IPR036769">
    <property type="entry name" value="Ribosomal_uL11_C_sf"/>
</dbReference>
<dbReference type="InterPro" id="IPR020785">
    <property type="entry name" value="Ribosomal_uL11_CS"/>
</dbReference>
<dbReference type="InterPro" id="IPR020784">
    <property type="entry name" value="Ribosomal_uL11_N"/>
</dbReference>
<dbReference type="InterPro" id="IPR036796">
    <property type="entry name" value="Ribosomal_uL11_N_sf"/>
</dbReference>
<dbReference type="NCBIfam" id="TIGR01632">
    <property type="entry name" value="L11_bact"/>
    <property type="match status" value="1"/>
</dbReference>
<dbReference type="PANTHER" id="PTHR11661">
    <property type="entry name" value="60S RIBOSOMAL PROTEIN L12"/>
    <property type="match status" value="1"/>
</dbReference>
<dbReference type="PANTHER" id="PTHR11661:SF1">
    <property type="entry name" value="LARGE RIBOSOMAL SUBUNIT PROTEIN UL11M"/>
    <property type="match status" value="1"/>
</dbReference>
<dbReference type="Pfam" id="PF00298">
    <property type="entry name" value="Ribosomal_L11"/>
    <property type="match status" value="1"/>
</dbReference>
<dbReference type="Pfam" id="PF03946">
    <property type="entry name" value="Ribosomal_L11_N"/>
    <property type="match status" value="1"/>
</dbReference>
<dbReference type="SMART" id="SM00649">
    <property type="entry name" value="RL11"/>
    <property type="match status" value="1"/>
</dbReference>
<dbReference type="SUPFAM" id="SSF54747">
    <property type="entry name" value="Ribosomal L11/L12e N-terminal domain"/>
    <property type="match status" value="1"/>
</dbReference>
<dbReference type="SUPFAM" id="SSF46906">
    <property type="entry name" value="Ribosomal protein L11, C-terminal domain"/>
    <property type="match status" value="1"/>
</dbReference>
<dbReference type="PROSITE" id="PS00359">
    <property type="entry name" value="RIBOSOMAL_L11"/>
    <property type="match status" value="1"/>
</dbReference>
<organism>
    <name type="scientific">Francisella tularensis subsp. holarctica (strain FTNF002-00 / FTA)</name>
    <dbReference type="NCBI Taxonomy" id="458234"/>
    <lineage>
        <taxon>Bacteria</taxon>
        <taxon>Pseudomonadati</taxon>
        <taxon>Pseudomonadota</taxon>
        <taxon>Gammaproteobacteria</taxon>
        <taxon>Thiotrichales</taxon>
        <taxon>Francisellaceae</taxon>
        <taxon>Francisella</taxon>
    </lineage>
</organism>
<keyword id="KW-0488">Methylation</keyword>
<keyword id="KW-0687">Ribonucleoprotein</keyword>
<keyword id="KW-0689">Ribosomal protein</keyword>
<keyword id="KW-0694">RNA-binding</keyword>
<keyword id="KW-0699">rRNA-binding</keyword>
<protein>
    <recommendedName>
        <fullName evidence="1">Large ribosomal subunit protein uL11</fullName>
    </recommendedName>
    <alternativeName>
        <fullName evidence="2">50S ribosomal protein L11</fullName>
    </alternativeName>
</protein>
<feature type="chain" id="PRO_1000046179" description="Large ribosomal subunit protein uL11">
    <location>
        <begin position="1"/>
        <end position="144"/>
    </location>
</feature>
<gene>
    <name evidence="1" type="primary">rplK</name>
    <name type="ordered locus">FTA_1852</name>
</gene>